<gene>
    <name type="ordered locus">MG269.1</name>
</gene>
<feature type="chain" id="PRO_0000210500" description="Uncharacterized protein MG269.1">
    <location>
        <begin position="1"/>
        <end position="128"/>
    </location>
</feature>
<name>Y269A_MYCGE</name>
<dbReference type="EMBL" id="L43967">
    <property type="status" value="NOT_ANNOTATED_CDS"/>
    <property type="molecule type" value="Genomic_DNA"/>
</dbReference>
<dbReference type="EMBL" id="U02215">
    <property type="protein sequence ID" value="AAD12511.1"/>
    <property type="molecule type" value="Genomic_DNA"/>
</dbReference>
<dbReference type="RefSeq" id="WP_009885901.1">
    <property type="nucleotide sequence ID" value="NC_000908.2"/>
</dbReference>
<dbReference type="SMR" id="Q49329"/>
<dbReference type="GeneID" id="88282425"/>
<dbReference type="InParanoid" id="Q49329"/>
<dbReference type="BioCyc" id="MGEN243273:G1GJ2-327-MONOMER"/>
<dbReference type="Proteomes" id="UP000000807">
    <property type="component" value="Chromosome"/>
</dbReference>
<proteinExistence type="predicted"/>
<sequence length="128" mass="15068">MDSFVQKYTNGFKSILNKVEKTDFATIKSEFQYNQANLEWVESKVSDLNNYLLDPNQFSDVVSFKKIANEKLDLFVKNHGNKLPFFLFTSFVLAIFSFVSVYVRHHYDLDFNDPDAIISFFRELAFHE</sequence>
<accession>Q49329</accession>
<protein>
    <recommendedName>
        <fullName>Uncharacterized protein MG269.1</fullName>
    </recommendedName>
</protein>
<keyword id="KW-1185">Reference proteome</keyword>
<organism>
    <name type="scientific">Mycoplasma genitalium (strain ATCC 33530 / DSM 19775 / NCTC 10195 / G37)</name>
    <name type="common">Mycoplasmoides genitalium</name>
    <dbReference type="NCBI Taxonomy" id="243273"/>
    <lineage>
        <taxon>Bacteria</taxon>
        <taxon>Bacillati</taxon>
        <taxon>Mycoplasmatota</taxon>
        <taxon>Mycoplasmoidales</taxon>
        <taxon>Mycoplasmoidaceae</taxon>
        <taxon>Mycoplasmoides</taxon>
    </lineage>
</organism>
<reference key="1">
    <citation type="journal article" date="1995" name="Science">
        <title>The minimal gene complement of Mycoplasma genitalium.</title>
        <authorList>
            <person name="Fraser C.M."/>
            <person name="Gocayne J.D."/>
            <person name="White O."/>
            <person name="Adams M.D."/>
            <person name="Clayton R.A."/>
            <person name="Fleischmann R.D."/>
            <person name="Bult C.J."/>
            <person name="Kerlavage A.R."/>
            <person name="Sutton G.G."/>
            <person name="Kelley J.M."/>
            <person name="Fritchman J.L."/>
            <person name="Weidman J.F."/>
            <person name="Small K.V."/>
            <person name="Sandusky M."/>
            <person name="Fuhrmann J.L."/>
            <person name="Nguyen D.T."/>
            <person name="Utterback T.R."/>
            <person name="Saudek D.M."/>
            <person name="Phillips C.A."/>
            <person name="Merrick J.M."/>
            <person name="Tomb J.-F."/>
            <person name="Dougherty B.A."/>
            <person name="Bott K.F."/>
            <person name="Hu P.-C."/>
            <person name="Lucier T.S."/>
            <person name="Peterson S.N."/>
            <person name="Smith H.O."/>
            <person name="Hutchison C.A. III"/>
            <person name="Venter J.C."/>
        </authorList>
    </citation>
    <scope>NUCLEOTIDE SEQUENCE [LARGE SCALE GENOMIC DNA]</scope>
    <source>
        <strain>ATCC 33530 / DSM 19775 / NCTC 10195 / G37</strain>
    </source>
</reference>
<reference key="2">
    <citation type="submission" date="2005-09" db="EMBL/GenBank/DDBJ databases">
        <authorList>
            <person name="Fraser C.M."/>
            <person name="Gocayne J.D."/>
            <person name="White O."/>
            <person name="Adams M.D."/>
            <person name="Clayton R.A."/>
            <person name="Fleischmann R.D."/>
            <person name="Bult C.J."/>
            <person name="Kerlavage A.R."/>
            <person name="Sutton G.G."/>
            <person name="Kelley J.M."/>
            <person name="Fritchman J.L."/>
            <person name="Weidman J.F."/>
            <person name="Small K.V."/>
            <person name="Sandusky M."/>
            <person name="Fuhrmann J.L."/>
            <person name="Nguyen D.T."/>
            <person name="Utterback T.R."/>
            <person name="Saudek D.M."/>
            <person name="Phillips C.A."/>
            <person name="Merrick J.M."/>
            <person name="Tomb J.-F."/>
            <person name="Dougherty B.A."/>
            <person name="Bott K.F."/>
            <person name="Hu P.-C."/>
            <person name="Lucier T.S."/>
            <person name="Peterson S.N."/>
            <person name="Smith H.O."/>
            <person name="Hutchison C.A. III"/>
            <person name="Venter J.C."/>
        </authorList>
    </citation>
    <scope>SEQUENCE REVISION</scope>
</reference>
<reference key="3">
    <citation type="journal article" date="1993" name="J. Bacteriol.">
        <title>A survey of the Mycoplasma genitalium genome by using random sequencing.</title>
        <authorList>
            <person name="Peterson S.N."/>
            <person name="Hu P.-C."/>
            <person name="Bott K.F."/>
            <person name="Hutchison C.A. III"/>
        </authorList>
    </citation>
    <scope>NUCLEOTIDE SEQUENCE [GENOMIC DNA] OF 85-128</scope>
    <source>
        <strain>ATCC 33530 / DSM 19775 / NCTC 10195 / G37</strain>
    </source>
</reference>
<reference key="4">
    <citation type="unpublished observations" date="2001-05">
        <authorList>
            <person name="Medigue C."/>
            <person name="Bocs S."/>
        </authorList>
    </citation>
    <scope>IDENTIFICATION</scope>
</reference>